<reference key="1">
    <citation type="submission" date="2006-03" db="EMBL/GenBank/DDBJ databases">
        <title>Complete sequence of chromosome of Psychrobacter cryohalolentis K5.</title>
        <authorList>
            <consortium name="US DOE Joint Genome Institute"/>
            <person name="Copeland A."/>
            <person name="Lucas S."/>
            <person name="Lapidus A."/>
            <person name="Barry K."/>
            <person name="Detter J.C."/>
            <person name="Glavina T."/>
            <person name="Hammon N."/>
            <person name="Israni S."/>
            <person name="Dalin E."/>
            <person name="Tice H."/>
            <person name="Pitluck S."/>
            <person name="Brettin T."/>
            <person name="Bruce D."/>
            <person name="Han C."/>
            <person name="Tapia R."/>
            <person name="Sims D.R."/>
            <person name="Gilna P."/>
            <person name="Schmutz J."/>
            <person name="Larimer F."/>
            <person name="Land M."/>
            <person name="Hauser L."/>
            <person name="Kyrpides N."/>
            <person name="Kim E."/>
            <person name="Richardson P."/>
        </authorList>
    </citation>
    <scope>NUCLEOTIDE SEQUENCE [LARGE SCALE GENOMIC DNA]</scope>
    <source>
        <strain>ATCC BAA-1226 / DSM 17306 / VKM B-2378 / K5</strain>
    </source>
</reference>
<name>URE11_PSYCK</name>
<proteinExistence type="inferred from homology"/>
<protein>
    <recommendedName>
        <fullName evidence="1">Urease subunit alpha 1</fullName>
        <ecNumber evidence="1">3.5.1.5</ecNumber>
    </recommendedName>
    <alternativeName>
        <fullName evidence="1">Urea amidohydrolase subunit alpha 1</fullName>
    </alternativeName>
</protein>
<organism>
    <name type="scientific">Psychrobacter cryohalolentis (strain ATCC BAA-1226 / DSM 17306 / VKM B-2378 / K5)</name>
    <dbReference type="NCBI Taxonomy" id="335284"/>
    <lineage>
        <taxon>Bacteria</taxon>
        <taxon>Pseudomonadati</taxon>
        <taxon>Pseudomonadota</taxon>
        <taxon>Gammaproteobacteria</taxon>
        <taxon>Moraxellales</taxon>
        <taxon>Moraxellaceae</taxon>
        <taxon>Psychrobacter</taxon>
    </lineage>
</organism>
<feature type="chain" id="PRO_0000239880" description="Urease subunit alpha 1">
    <location>
        <begin position="1"/>
        <end position="567"/>
    </location>
</feature>
<feature type="domain" description="Urease" evidence="1">
    <location>
        <begin position="128"/>
        <end position="567"/>
    </location>
</feature>
<feature type="active site" description="Proton donor" evidence="1">
    <location>
        <position position="319"/>
    </location>
</feature>
<feature type="binding site" evidence="1">
    <location>
        <position position="133"/>
    </location>
    <ligand>
        <name>Ni(2+)</name>
        <dbReference type="ChEBI" id="CHEBI:49786"/>
        <label>1</label>
    </ligand>
</feature>
<feature type="binding site" evidence="1">
    <location>
        <position position="135"/>
    </location>
    <ligand>
        <name>Ni(2+)</name>
        <dbReference type="ChEBI" id="CHEBI:49786"/>
        <label>1</label>
    </ligand>
</feature>
<feature type="binding site" description="via carbamate group" evidence="1">
    <location>
        <position position="216"/>
    </location>
    <ligand>
        <name>Ni(2+)</name>
        <dbReference type="ChEBI" id="CHEBI:49786"/>
        <label>1</label>
    </ligand>
</feature>
<feature type="binding site" description="via carbamate group" evidence="1">
    <location>
        <position position="216"/>
    </location>
    <ligand>
        <name>Ni(2+)</name>
        <dbReference type="ChEBI" id="CHEBI:49786"/>
        <label>2</label>
    </ligand>
</feature>
<feature type="binding site" evidence="1">
    <location>
        <position position="218"/>
    </location>
    <ligand>
        <name>substrate</name>
    </ligand>
</feature>
<feature type="binding site" evidence="1">
    <location>
        <position position="245"/>
    </location>
    <ligand>
        <name>Ni(2+)</name>
        <dbReference type="ChEBI" id="CHEBI:49786"/>
        <label>2</label>
    </ligand>
</feature>
<feature type="binding site" evidence="1">
    <location>
        <position position="271"/>
    </location>
    <ligand>
        <name>Ni(2+)</name>
        <dbReference type="ChEBI" id="CHEBI:49786"/>
        <label>2</label>
    </ligand>
</feature>
<feature type="binding site" evidence="1">
    <location>
        <position position="359"/>
    </location>
    <ligand>
        <name>Ni(2+)</name>
        <dbReference type="ChEBI" id="CHEBI:49786"/>
        <label>1</label>
    </ligand>
</feature>
<feature type="modified residue" description="N6-carboxylysine" evidence="1">
    <location>
        <position position="216"/>
    </location>
</feature>
<sequence length="567" mass="61411">MKISRDAYANMYGPTVGDRIRLGDTELWIEIEKDHTHYGEEVVFGGGKVIRDGMGQSQLCSDSVMDTVITNVIIIDWWGIVKADVGLKDGRIVAIGKAGNPDTQPDVDIIIGAGTEIIAGENQILTAGAVDTHVHYICPQQVDEALMSGLTTMIGGGTGPATGSVATTNTPGPWHIGKMMQAVDDLPINIGFLGKGSASTPAALEEQVKAGVMSLKVHEDWAATPATIGNALDVADRYDIQVALHADSLNESGFVKDTLEAFKDRCIHSYHTEGAGGGHAPDIIVACGQPNVLPSSTNPTRPYTINTVDEHLDMLMECHHLDPNIPEDVAFADSRIRRETIAAEDILHDLGAISMISSDSQAMGRIGEVVCRTWQTAHKMRLQRGLLPEDQERGTDNFRVKRYIAKYTINPAITHGVSHEVGSVEIGKMADLVLWRPKFFGVKPSIILKGGMIAGAAMGDPNAAISTPQPVHYRRMFGALGRAVSATRVTFVSQAAMDTGLEEKLGLRSRLVACKNVRSMRKKDMKLNDYCPNITVDPETYEVRVDGVLLTCEPLSELPLAQLYHLF</sequence>
<accession>Q1QCE0</accession>
<dbReference type="EC" id="3.5.1.5" evidence="1"/>
<dbReference type="EMBL" id="CP000323">
    <property type="protein sequence ID" value="ABE74663.1"/>
    <property type="molecule type" value="Genomic_DNA"/>
</dbReference>
<dbReference type="RefSeq" id="WP_011513224.1">
    <property type="nucleotide sequence ID" value="NC_007969.1"/>
</dbReference>
<dbReference type="SMR" id="Q1QCE0"/>
<dbReference type="STRING" id="335284.Pcryo_0882"/>
<dbReference type="KEGG" id="pcr:Pcryo_0882"/>
<dbReference type="eggNOG" id="COG0804">
    <property type="taxonomic scope" value="Bacteria"/>
</dbReference>
<dbReference type="HOGENOM" id="CLU_000980_0_0_6"/>
<dbReference type="UniPathway" id="UPA00258">
    <property type="reaction ID" value="UER00370"/>
</dbReference>
<dbReference type="Proteomes" id="UP000002425">
    <property type="component" value="Chromosome"/>
</dbReference>
<dbReference type="GO" id="GO:0005737">
    <property type="term" value="C:cytoplasm"/>
    <property type="evidence" value="ECO:0007669"/>
    <property type="project" value="UniProtKB-SubCell"/>
</dbReference>
<dbReference type="GO" id="GO:0016151">
    <property type="term" value="F:nickel cation binding"/>
    <property type="evidence" value="ECO:0007669"/>
    <property type="project" value="UniProtKB-UniRule"/>
</dbReference>
<dbReference type="GO" id="GO:0009039">
    <property type="term" value="F:urease activity"/>
    <property type="evidence" value="ECO:0007669"/>
    <property type="project" value="UniProtKB-UniRule"/>
</dbReference>
<dbReference type="GO" id="GO:0043419">
    <property type="term" value="P:urea catabolic process"/>
    <property type="evidence" value="ECO:0007669"/>
    <property type="project" value="UniProtKB-UniRule"/>
</dbReference>
<dbReference type="CDD" id="cd00375">
    <property type="entry name" value="Urease_alpha"/>
    <property type="match status" value="1"/>
</dbReference>
<dbReference type="Gene3D" id="3.20.20.140">
    <property type="entry name" value="Metal-dependent hydrolases"/>
    <property type="match status" value="1"/>
</dbReference>
<dbReference type="Gene3D" id="2.30.40.10">
    <property type="entry name" value="Urease, subunit C, domain 1"/>
    <property type="match status" value="1"/>
</dbReference>
<dbReference type="HAMAP" id="MF_01953">
    <property type="entry name" value="Urease_alpha"/>
    <property type="match status" value="1"/>
</dbReference>
<dbReference type="InterPro" id="IPR006680">
    <property type="entry name" value="Amidohydro-rel"/>
</dbReference>
<dbReference type="InterPro" id="IPR011059">
    <property type="entry name" value="Metal-dep_hydrolase_composite"/>
</dbReference>
<dbReference type="InterPro" id="IPR032466">
    <property type="entry name" value="Metal_Hydrolase"/>
</dbReference>
<dbReference type="InterPro" id="IPR011612">
    <property type="entry name" value="Urease_alpha_N_dom"/>
</dbReference>
<dbReference type="InterPro" id="IPR050112">
    <property type="entry name" value="Urease_alpha_subunit"/>
</dbReference>
<dbReference type="InterPro" id="IPR005848">
    <property type="entry name" value="Urease_asu"/>
</dbReference>
<dbReference type="InterPro" id="IPR017951">
    <property type="entry name" value="Urease_asu_c"/>
</dbReference>
<dbReference type="InterPro" id="IPR029754">
    <property type="entry name" value="Urease_Ni-bd"/>
</dbReference>
<dbReference type="NCBIfam" id="NF009685">
    <property type="entry name" value="PRK13206.1"/>
    <property type="match status" value="1"/>
</dbReference>
<dbReference type="NCBIfam" id="NF009686">
    <property type="entry name" value="PRK13207.1"/>
    <property type="match status" value="1"/>
</dbReference>
<dbReference type="NCBIfam" id="TIGR01792">
    <property type="entry name" value="urease_alph"/>
    <property type="match status" value="1"/>
</dbReference>
<dbReference type="PANTHER" id="PTHR43440">
    <property type="entry name" value="UREASE"/>
    <property type="match status" value="1"/>
</dbReference>
<dbReference type="PANTHER" id="PTHR43440:SF1">
    <property type="entry name" value="UREASE"/>
    <property type="match status" value="1"/>
</dbReference>
<dbReference type="Pfam" id="PF01979">
    <property type="entry name" value="Amidohydro_1"/>
    <property type="match status" value="1"/>
</dbReference>
<dbReference type="Pfam" id="PF00449">
    <property type="entry name" value="Urease_alpha"/>
    <property type="match status" value="1"/>
</dbReference>
<dbReference type="PRINTS" id="PR01752">
    <property type="entry name" value="UREASE"/>
</dbReference>
<dbReference type="SUPFAM" id="SSF51338">
    <property type="entry name" value="Composite domain of metallo-dependent hydrolases"/>
    <property type="match status" value="2"/>
</dbReference>
<dbReference type="SUPFAM" id="SSF51556">
    <property type="entry name" value="Metallo-dependent hydrolases"/>
    <property type="match status" value="1"/>
</dbReference>
<dbReference type="PROSITE" id="PS01120">
    <property type="entry name" value="UREASE_1"/>
    <property type="match status" value="1"/>
</dbReference>
<dbReference type="PROSITE" id="PS51368">
    <property type="entry name" value="UREASE_3"/>
    <property type="match status" value="1"/>
</dbReference>
<keyword id="KW-0963">Cytoplasm</keyword>
<keyword id="KW-0378">Hydrolase</keyword>
<keyword id="KW-0479">Metal-binding</keyword>
<keyword id="KW-0533">Nickel</keyword>
<evidence type="ECO:0000255" key="1">
    <source>
        <dbReference type="HAMAP-Rule" id="MF_01953"/>
    </source>
</evidence>
<comment type="catalytic activity">
    <reaction evidence="1">
        <text>urea + 2 H2O + H(+) = hydrogencarbonate + 2 NH4(+)</text>
        <dbReference type="Rhea" id="RHEA:20557"/>
        <dbReference type="ChEBI" id="CHEBI:15377"/>
        <dbReference type="ChEBI" id="CHEBI:15378"/>
        <dbReference type="ChEBI" id="CHEBI:16199"/>
        <dbReference type="ChEBI" id="CHEBI:17544"/>
        <dbReference type="ChEBI" id="CHEBI:28938"/>
        <dbReference type="EC" id="3.5.1.5"/>
    </reaction>
</comment>
<comment type="cofactor">
    <cofactor evidence="1">
        <name>Ni cation</name>
        <dbReference type="ChEBI" id="CHEBI:25516"/>
    </cofactor>
    <text evidence="1">Binds 2 nickel ions per subunit.</text>
</comment>
<comment type="pathway">
    <text evidence="1">Nitrogen metabolism; urea degradation; CO(2) and NH(3) from urea (urease route): step 1/1.</text>
</comment>
<comment type="subunit">
    <text evidence="1">Heterotrimer of UreA (gamma), UreB (beta) and UreC (alpha) subunits. Three heterotrimers associate to form the active enzyme.</text>
</comment>
<comment type="subcellular location">
    <subcellularLocation>
        <location evidence="1">Cytoplasm</location>
    </subcellularLocation>
</comment>
<comment type="PTM">
    <text evidence="1">Carboxylation allows a single lysine to coordinate two nickel ions.</text>
</comment>
<comment type="similarity">
    <text evidence="1">Belongs to the metallo-dependent hydrolases superfamily. Urease alpha subunit family.</text>
</comment>
<gene>
    <name evidence="1" type="primary">ureC1</name>
    <name type="ordered locus">Pcryo_0882</name>
</gene>